<proteinExistence type="inferred from homology"/>
<name>NUOI_PECAS</name>
<reference key="1">
    <citation type="journal article" date="2004" name="Proc. Natl. Acad. Sci. U.S.A.">
        <title>Genome sequence of the enterobacterial phytopathogen Erwinia carotovora subsp. atroseptica and characterization of virulence factors.</title>
        <authorList>
            <person name="Bell K.S."/>
            <person name="Sebaihia M."/>
            <person name="Pritchard L."/>
            <person name="Holden M.T.G."/>
            <person name="Hyman L.J."/>
            <person name="Holeva M.C."/>
            <person name="Thomson N.R."/>
            <person name="Bentley S.D."/>
            <person name="Churcher L.J.C."/>
            <person name="Mungall K."/>
            <person name="Atkin R."/>
            <person name="Bason N."/>
            <person name="Brooks K."/>
            <person name="Chillingworth T."/>
            <person name="Clark K."/>
            <person name="Doggett J."/>
            <person name="Fraser A."/>
            <person name="Hance Z."/>
            <person name="Hauser H."/>
            <person name="Jagels K."/>
            <person name="Moule S."/>
            <person name="Norbertczak H."/>
            <person name="Ormond D."/>
            <person name="Price C."/>
            <person name="Quail M.A."/>
            <person name="Sanders M."/>
            <person name="Walker D."/>
            <person name="Whitehead S."/>
            <person name="Salmond G.P.C."/>
            <person name="Birch P.R.J."/>
            <person name="Parkhill J."/>
            <person name="Toth I.K."/>
        </authorList>
    </citation>
    <scope>NUCLEOTIDE SEQUENCE [LARGE SCALE GENOMIC DNA]</scope>
    <source>
        <strain>SCRI 1043 / ATCC BAA-672</strain>
    </source>
</reference>
<accession>Q6D2S4</accession>
<sequence>MTLKELVVGFGTQIRSICMVGSNAFKKRETRMYPEEPVNPPPRYRGRIVLTRDPDGEERCVACNLCAVACPVGCISLQKAETKDGRWYPEFFRVNFSRCIFCGFCEEACPTTAIQLTPDFEMGEYKRQDLVYEKEDLLISGPGKYPEYNFYRMAGMAIDGKDKGEAENEAKPIDVKGLLP</sequence>
<protein>
    <recommendedName>
        <fullName evidence="1">NADH-quinone oxidoreductase subunit I</fullName>
        <ecNumber evidence="1">7.1.1.-</ecNumber>
    </recommendedName>
    <alternativeName>
        <fullName evidence="1">NADH dehydrogenase I subunit I</fullName>
    </alternativeName>
    <alternativeName>
        <fullName evidence="1">NDH-1 subunit I</fullName>
    </alternativeName>
</protein>
<comment type="function">
    <text evidence="1">NDH-1 shuttles electrons from NADH, via FMN and iron-sulfur (Fe-S) centers, to quinones in the respiratory chain. The immediate electron acceptor for the enzyme in this species is believed to be ubiquinone. Couples the redox reaction to proton translocation (for every two electrons transferred, four hydrogen ions are translocated across the cytoplasmic membrane), and thus conserves the redox energy in a proton gradient.</text>
</comment>
<comment type="catalytic activity">
    <reaction evidence="1">
        <text>a quinone + NADH + 5 H(+)(in) = a quinol + NAD(+) + 4 H(+)(out)</text>
        <dbReference type="Rhea" id="RHEA:57888"/>
        <dbReference type="ChEBI" id="CHEBI:15378"/>
        <dbReference type="ChEBI" id="CHEBI:24646"/>
        <dbReference type="ChEBI" id="CHEBI:57540"/>
        <dbReference type="ChEBI" id="CHEBI:57945"/>
        <dbReference type="ChEBI" id="CHEBI:132124"/>
    </reaction>
</comment>
<comment type="cofactor">
    <cofactor evidence="1">
        <name>[4Fe-4S] cluster</name>
        <dbReference type="ChEBI" id="CHEBI:49883"/>
    </cofactor>
    <text evidence="1">Binds 2 [4Fe-4S] clusters per subunit.</text>
</comment>
<comment type="subunit">
    <text evidence="1">NDH-1 is composed of 13 different subunits. Subunits NuoA, H, J, K, L, M, N constitute the membrane sector of the complex.</text>
</comment>
<comment type="subcellular location">
    <subcellularLocation>
        <location evidence="1">Cell inner membrane</location>
        <topology evidence="1">Peripheral membrane protein</topology>
    </subcellularLocation>
</comment>
<comment type="similarity">
    <text evidence="1">Belongs to the complex I 23 kDa subunit family.</text>
</comment>
<feature type="chain" id="PRO_0000245705" description="NADH-quinone oxidoreductase subunit I">
    <location>
        <begin position="1"/>
        <end position="180"/>
    </location>
</feature>
<feature type="domain" description="4Fe-4S ferredoxin-type 1" evidence="1">
    <location>
        <begin position="50"/>
        <end position="80"/>
    </location>
</feature>
<feature type="domain" description="4Fe-4S ferredoxin-type 2" evidence="1">
    <location>
        <begin position="90"/>
        <end position="119"/>
    </location>
</feature>
<feature type="binding site" evidence="1">
    <location>
        <position position="60"/>
    </location>
    <ligand>
        <name>[4Fe-4S] cluster</name>
        <dbReference type="ChEBI" id="CHEBI:49883"/>
        <label>1</label>
    </ligand>
</feature>
<feature type="binding site" evidence="1">
    <location>
        <position position="63"/>
    </location>
    <ligand>
        <name>[4Fe-4S] cluster</name>
        <dbReference type="ChEBI" id="CHEBI:49883"/>
        <label>1</label>
    </ligand>
</feature>
<feature type="binding site" evidence="1">
    <location>
        <position position="66"/>
    </location>
    <ligand>
        <name>[4Fe-4S] cluster</name>
        <dbReference type="ChEBI" id="CHEBI:49883"/>
        <label>1</label>
    </ligand>
</feature>
<feature type="binding site" evidence="1">
    <location>
        <position position="70"/>
    </location>
    <ligand>
        <name>[4Fe-4S] cluster</name>
        <dbReference type="ChEBI" id="CHEBI:49883"/>
        <label>2</label>
    </ligand>
</feature>
<feature type="binding site" evidence="1">
    <location>
        <position position="99"/>
    </location>
    <ligand>
        <name>[4Fe-4S] cluster</name>
        <dbReference type="ChEBI" id="CHEBI:49883"/>
        <label>2</label>
    </ligand>
</feature>
<feature type="binding site" evidence="1">
    <location>
        <position position="102"/>
    </location>
    <ligand>
        <name>[4Fe-4S] cluster</name>
        <dbReference type="ChEBI" id="CHEBI:49883"/>
        <label>2</label>
    </ligand>
</feature>
<feature type="binding site" evidence="1">
    <location>
        <position position="105"/>
    </location>
    <ligand>
        <name>[4Fe-4S] cluster</name>
        <dbReference type="ChEBI" id="CHEBI:49883"/>
        <label>2</label>
    </ligand>
</feature>
<feature type="binding site" evidence="1">
    <location>
        <position position="109"/>
    </location>
    <ligand>
        <name>[4Fe-4S] cluster</name>
        <dbReference type="ChEBI" id="CHEBI:49883"/>
        <label>1</label>
    </ligand>
</feature>
<evidence type="ECO:0000255" key="1">
    <source>
        <dbReference type="HAMAP-Rule" id="MF_01351"/>
    </source>
</evidence>
<dbReference type="EC" id="7.1.1.-" evidence="1"/>
<dbReference type="EMBL" id="BX950851">
    <property type="protein sequence ID" value="CAG75920.1"/>
    <property type="molecule type" value="Genomic_DNA"/>
</dbReference>
<dbReference type="RefSeq" id="WP_005969838.1">
    <property type="nucleotide sequence ID" value="NC_004547.2"/>
</dbReference>
<dbReference type="SMR" id="Q6D2S4"/>
<dbReference type="STRING" id="218491.ECA3021"/>
<dbReference type="GeneID" id="57209708"/>
<dbReference type="KEGG" id="eca:ECA3021"/>
<dbReference type="eggNOG" id="COG1143">
    <property type="taxonomic scope" value="Bacteria"/>
</dbReference>
<dbReference type="HOGENOM" id="CLU_067218_4_3_6"/>
<dbReference type="OrthoDB" id="9808559at2"/>
<dbReference type="Proteomes" id="UP000007966">
    <property type="component" value="Chromosome"/>
</dbReference>
<dbReference type="GO" id="GO:0005886">
    <property type="term" value="C:plasma membrane"/>
    <property type="evidence" value="ECO:0007669"/>
    <property type="project" value="UniProtKB-SubCell"/>
</dbReference>
<dbReference type="GO" id="GO:0051539">
    <property type="term" value="F:4 iron, 4 sulfur cluster binding"/>
    <property type="evidence" value="ECO:0007669"/>
    <property type="project" value="UniProtKB-KW"/>
</dbReference>
<dbReference type="GO" id="GO:0005506">
    <property type="term" value="F:iron ion binding"/>
    <property type="evidence" value="ECO:0007669"/>
    <property type="project" value="UniProtKB-UniRule"/>
</dbReference>
<dbReference type="GO" id="GO:0050136">
    <property type="term" value="F:NADH:ubiquinone reductase (non-electrogenic) activity"/>
    <property type="evidence" value="ECO:0007669"/>
    <property type="project" value="UniProtKB-UniRule"/>
</dbReference>
<dbReference type="GO" id="GO:0048038">
    <property type="term" value="F:quinone binding"/>
    <property type="evidence" value="ECO:0007669"/>
    <property type="project" value="UniProtKB-KW"/>
</dbReference>
<dbReference type="GO" id="GO:0009060">
    <property type="term" value="P:aerobic respiration"/>
    <property type="evidence" value="ECO:0007669"/>
    <property type="project" value="TreeGrafter"/>
</dbReference>
<dbReference type="FunFam" id="3.30.70.3270:FF:000002">
    <property type="entry name" value="NADH-quinone oxidoreductase subunit I"/>
    <property type="match status" value="1"/>
</dbReference>
<dbReference type="Gene3D" id="3.30.70.3270">
    <property type="match status" value="1"/>
</dbReference>
<dbReference type="HAMAP" id="MF_01351">
    <property type="entry name" value="NDH1_NuoI"/>
    <property type="match status" value="1"/>
</dbReference>
<dbReference type="InterPro" id="IPR017896">
    <property type="entry name" value="4Fe4S_Fe-S-bd"/>
</dbReference>
<dbReference type="InterPro" id="IPR017900">
    <property type="entry name" value="4Fe4S_Fe_S_CS"/>
</dbReference>
<dbReference type="InterPro" id="IPR010226">
    <property type="entry name" value="NADH_quinone_OxRdtase_chainI"/>
</dbReference>
<dbReference type="NCBIfam" id="TIGR01971">
    <property type="entry name" value="NuoI"/>
    <property type="match status" value="1"/>
</dbReference>
<dbReference type="NCBIfam" id="NF004536">
    <property type="entry name" value="PRK05888.1-1"/>
    <property type="match status" value="1"/>
</dbReference>
<dbReference type="PANTHER" id="PTHR10849:SF20">
    <property type="entry name" value="NADH DEHYDROGENASE [UBIQUINONE] IRON-SULFUR PROTEIN 8, MITOCHONDRIAL"/>
    <property type="match status" value="1"/>
</dbReference>
<dbReference type="PANTHER" id="PTHR10849">
    <property type="entry name" value="NADH DEHYDROGENASE UBIQUINONE IRON-SULFUR PROTEIN 8, MITOCHONDRIAL"/>
    <property type="match status" value="1"/>
</dbReference>
<dbReference type="Pfam" id="PF12838">
    <property type="entry name" value="Fer4_7"/>
    <property type="match status" value="1"/>
</dbReference>
<dbReference type="SUPFAM" id="SSF54862">
    <property type="entry name" value="4Fe-4S ferredoxins"/>
    <property type="match status" value="1"/>
</dbReference>
<dbReference type="PROSITE" id="PS00198">
    <property type="entry name" value="4FE4S_FER_1"/>
    <property type="match status" value="2"/>
</dbReference>
<dbReference type="PROSITE" id="PS51379">
    <property type="entry name" value="4FE4S_FER_2"/>
    <property type="match status" value="2"/>
</dbReference>
<keyword id="KW-0004">4Fe-4S</keyword>
<keyword id="KW-0997">Cell inner membrane</keyword>
<keyword id="KW-1003">Cell membrane</keyword>
<keyword id="KW-0408">Iron</keyword>
<keyword id="KW-0411">Iron-sulfur</keyword>
<keyword id="KW-0472">Membrane</keyword>
<keyword id="KW-0479">Metal-binding</keyword>
<keyword id="KW-0520">NAD</keyword>
<keyword id="KW-0874">Quinone</keyword>
<keyword id="KW-1185">Reference proteome</keyword>
<keyword id="KW-0677">Repeat</keyword>
<keyword id="KW-1278">Translocase</keyword>
<keyword id="KW-0830">Ubiquinone</keyword>
<organism>
    <name type="scientific">Pectobacterium atrosepticum (strain SCRI 1043 / ATCC BAA-672)</name>
    <name type="common">Erwinia carotovora subsp. atroseptica</name>
    <dbReference type="NCBI Taxonomy" id="218491"/>
    <lineage>
        <taxon>Bacteria</taxon>
        <taxon>Pseudomonadati</taxon>
        <taxon>Pseudomonadota</taxon>
        <taxon>Gammaproteobacteria</taxon>
        <taxon>Enterobacterales</taxon>
        <taxon>Pectobacteriaceae</taxon>
        <taxon>Pectobacterium</taxon>
    </lineage>
</organism>
<gene>
    <name evidence="1" type="primary">nuoI</name>
    <name type="ordered locus">ECA3021</name>
</gene>